<name>MYO6_ARATH</name>
<evidence type="ECO:0000250" key="1"/>
<evidence type="ECO:0000255" key="2"/>
<evidence type="ECO:0000255" key="3">
    <source>
        <dbReference type="PROSITE-ProRule" id="PRU00116"/>
    </source>
</evidence>
<evidence type="ECO:0000255" key="4">
    <source>
        <dbReference type="PROSITE-ProRule" id="PRU00503"/>
    </source>
</evidence>
<evidence type="ECO:0000255" key="5">
    <source>
        <dbReference type="PROSITE-ProRule" id="PRU00782"/>
    </source>
</evidence>
<evidence type="ECO:0000255" key="6">
    <source>
        <dbReference type="PROSITE-ProRule" id="PRU01190"/>
    </source>
</evidence>
<evidence type="ECO:0000269" key="7">
    <source>
    </source>
</evidence>
<evidence type="ECO:0000269" key="8">
    <source>
    </source>
</evidence>
<evidence type="ECO:0000269" key="9">
    <source>
    </source>
</evidence>
<evidence type="ECO:0000269" key="10">
    <source>
    </source>
</evidence>
<evidence type="ECO:0000269" key="11">
    <source>
    </source>
</evidence>
<evidence type="ECO:0000269" key="12">
    <source>
    </source>
</evidence>
<evidence type="ECO:0000269" key="13">
    <source>
    </source>
</evidence>
<evidence type="ECO:0000269" key="14">
    <source>
    </source>
</evidence>
<evidence type="ECO:0000269" key="15">
    <source>
    </source>
</evidence>
<evidence type="ECO:0000269" key="16">
    <source>
    </source>
</evidence>
<evidence type="ECO:0000269" key="17">
    <source>
    </source>
</evidence>
<evidence type="ECO:0000269" key="18">
    <source>
    </source>
</evidence>
<evidence type="ECO:0000305" key="19"/>
<evidence type="ECO:0007829" key="20">
    <source>
        <dbReference type="PDB" id="7DHW"/>
    </source>
</evidence>
<protein>
    <recommendedName>
        <fullName>Myosin-6</fullName>
    </recommendedName>
    <alternativeName>
        <fullName>AtMYA2</fullName>
    </alternativeName>
</protein>
<accession>Q9LKB9</accession>
<accession>Q0WPF0</accession>
<accession>Q39158</accession>
<feature type="chain" id="PRO_0000422861" description="Myosin-6">
    <location>
        <begin position="1"/>
        <end position="1505"/>
    </location>
</feature>
<feature type="domain" description="Myosin N-terminal SH3-like" evidence="6">
    <location>
        <begin position="8"/>
        <end position="57"/>
    </location>
</feature>
<feature type="domain" description="Myosin motor" evidence="5">
    <location>
        <begin position="62"/>
        <end position="731"/>
    </location>
</feature>
<feature type="domain" description="IQ 1" evidence="3">
    <location>
        <begin position="734"/>
        <end position="763"/>
    </location>
</feature>
<feature type="domain" description="IQ 2" evidence="3">
    <location>
        <begin position="757"/>
        <end position="786"/>
    </location>
</feature>
<feature type="domain" description="IQ 3" evidence="3">
    <location>
        <begin position="782"/>
        <end position="811"/>
    </location>
</feature>
<feature type="domain" description="IQ 4" evidence="3">
    <location>
        <begin position="805"/>
        <end position="834"/>
    </location>
</feature>
<feature type="domain" description="IQ 5" evidence="3">
    <location>
        <begin position="830"/>
        <end position="859"/>
    </location>
</feature>
<feature type="domain" description="IQ 6" evidence="3">
    <location>
        <begin position="853"/>
        <end position="882"/>
    </location>
</feature>
<feature type="domain" description="Dilute" evidence="4">
    <location>
        <begin position="1148"/>
        <end position="1452"/>
    </location>
</feature>
<feature type="region of interest" description="Actin-binding" evidence="2">
    <location>
        <begin position="495"/>
        <end position="529"/>
    </location>
</feature>
<feature type="region of interest" description="Actin-binding" evidence="2">
    <location>
        <begin position="531"/>
        <end position="554"/>
    </location>
</feature>
<feature type="region of interest" description="Actin-binding" evidence="2">
    <location>
        <begin position="589"/>
        <end position="612"/>
    </location>
</feature>
<feature type="region of interest" description="Actin-binding" evidence="1">
    <location>
        <begin position="612"/>
        <end position="634"/>
    </location>
</feature>
<feature type="coiled-coil region" evidence="2">
    <location>
        <begin position="883"/>
        <end position="1048"/>
    </location>
</feature>
<feature type="binding site" evidence="2">
    <location>
        <begin position="156"/>
        <end position="163"/>
    </location>
    <ligand>
        <name>ATP</name>
        <dbReference type="ChEBI" id="CHEBI:30616"/>
    </ligand>
</feature>
<feature type="binding site" evidence="2">
    <location>
        <begin position="209"/>
        <end position="217"/>
    </location>
    <ligand>
        <name>ATP</name>
        <dbReference type="ChEBI" id="CHEBI:30616"/>
    </ligand>
</feature>
<feature type="sequence conflict" description="In Ref. 1; CAA84066." evidence="19" ref="1">
    <original>A</original>
    <variation>P</variation>
    <location>
        <position position="136"/>
    </location>
</feature>
<feature type="sequence conflict" description="In Ref. 1; CAA84066." evidence="19" ref="1">
    <original>P</original>
    <variation>S</variation>
    <location>
        <position position="345"/>
    </location>
</feature>
<feature type="sequence conflict" description="In Ref. 4; BAF00999." evidence="19" ref="4">
    <original>V</original>
    <variation>A</variation>
    <location>
        <position position="1442"/>
    </location>
</feature>
<feature type="strand" evidence="20">
    <location>
        <begin position="12"/>
        <end position="16"/>
    </location>
</feature>
<feature type="strand" evidence="20">
    <location>
        <begin position="18"/>
        <end position="30"/>
    </location>
</feature>
<feature type="strand" evidence="20">
    <location>
        <begin position="32"/>
        <end position="39"/>
    </location>
</feature>
<feature type="strand" evidence="20">
    <location>
        <begin position="44"/>
        <end position="48"/>
    </location>
</feature>
<feature type="turn" evidence="20">
    <location>
        <begin position="49"/>
        <end position="51"/>
    </location>
</feature>
<feature type="helix" evidence="20">
    <location>
        <begin position="67"/>
        <end position="69"/>
    </location>
</feature>
<feature type="helix" evidence="20">
    <location>
        <begin position="75"/>
        <end position="87"/>
    </location>
</feature>
<feature type="strand" evidence="20">
    <location>
        <begin position="92"/>
        <end position="95"/>
    </location>
</feature>
<feature type="strand" evidence="20">
    <location>
        <begin position="98"/>
        <end position="102"/>
    </location>
</feature>
<feature type="helix" evidence="20">
    <location>
        <begin position="110"/>
        <end position="112"/>
    </location>
</feature>
<feature type="helix" evidence="20">
    <location>
        <begin position="114"/>
        <end position="119"/>
    </location>
</feature>
<feature type="turn" evidence="20">
    <location>
        <begin position="125"/>
        <end position="127"/>
    </location>
</feature>
<feature type="helix" evidence="20">
    <location>
        <begin position="132"/>
        <end position="146"/>
    </location>
</feature>
<feature type="strand" evidence="20">
    <location>
        <begin position="150"/>
        <end position="155"/>
    </location>
</feature>
<feature type="helix" evidence="20">
    <location>
        <begin position="162"/>
        <end position="177"/>
    </location>
</feature>
<feature type="helix" evidence="20">
    <location>
        <begin position="187"/>
        <end position="202"/>
    </location>
</feature>
<feature type="strand" evidence="20">
    <location>
        <begin position="212"/>
        <end position="223"/>
    </location>
</feature>
<feature type="strand" evidence="20">
    <location>
        <begin position="229"/>
        <end position="237"/>
    </location>
</feature>
<feature type="helix" evidence="20">
    <location>
        <begin position="242"/>
        <end position="244"/>
    </location>
</feature>
<feature type="strand" evidence="20">
    <location>
        <begin position="249"/>
        <end position="251"/>
    </location>
</feature>
<feature type="helix" evidence="20">
    <location>
        <begin position="255"/>
        <end position="261"/>
    </location>
</feature>
<feature type="turn" evidence="20">
    <location>
        <begin position="265"/>
        <end position="267"/>
    </location>
</feature>
<feature type="turn" evidence="20">
    <location>
        <begin position="269"/>
        <end position="272"/>
    </location>
</feature>
<feature type="helix" evidence="20">
    <location>
        <begin position="276"/>
        <end position="278"/>
    </location>
</feature>
<feature type="helix" evidence="20">
    <location>
        <begin position="280"/>
        <end position="283"/>
    </location>
</feature>
<feature type="helix" evidence="20">
    <location>
        <begin position="295"/>
        <end position="309"/>
    </location>
</feature>
<feature type="helix" evidence="20">
    <location>
        <begin position="313"/>
        <end position="330"/>
    </location>
</feature>
<feature type="strand" evidence="20">
    <location>
        <begin position="334"/>
        <end position="336"/>
    </location>
</feature>
<feature type="strand" evidence="20">
    <location>
        <begin position="343"/>
        <end position="345"/>
    </location>
</feature>
<feature type="helix" evidence="20">
    <location>
        <begin position="348"/>
        <end position="360"/>
    </location>
</feature>
<feature type="helix" evidence="20">
    <location>
        <begin position="365"/>
        <end position="373"/>
    </location>
</feature>
<feature type="helix" evidence="20">
    <location>
        <begin position="390"/>
        <end position="420"/>
    </location>
</feature>
<feature type="strand" evidence="20">
    <location>
        <begin position="427"/>
        <end position="434"/>
    </location>
</feature>
<feature type="helix" evidence="20">
    <location>
        <begin position="446"/>
        <end position="466"/>
    </location>
</feature>
<feature type="helix" evidence="20">
    <location>
        <begin position="468"/>
        <end position="476"/>
    </location>
</feature>
<feature type="helix" evidence="20">
    <location>
        <begin position="490"/>
        <end position="497"/>
    </location>
</feature>
<feature type="strand" evidence="20">
    <location>
        <begin position="499"/>
        <end position="501"/>
    </location>
</feature>
<feature type="helix" evidence="20">
    <location>
        <begin position="503"/>
        <end position="512"/>
    </location>
</feature>
<feature type="strand" evidence="20">
    <location>
        <begin position="513"/>
        <end position="515"/>
    </location>
</feature>
<feature type="helix" evidence="20">
    <location>
        <begin position="518"/>
        <end position="528"/>
    </location>
</feature>
<feature type="strand" evidence="20">
    <location>
        <begin position="529"/>
        <end position="531"/>
    </location>
</feature>
<feature type="strand" evidence="20">
    <location>
        <begin position="533"/>
        <end position="536"/>
    </location>
</feature>
<feature type="strand" evidence="20">
    <location>
        <begin position="542"/>
        <end position="549"/>
    </location>
</feature>
<feature type="strand" evidence="20">
    <location>
        <begin position="552"/>
        <end position="557"/>
    </location>
</feature>
<feature type="helix" evidence="20">
    <location>
        <begin position="558"/>
        <end position="560"/>
    </location>
</feature>
<feature type="helix" evidence="20">
    <location>
        <begin position="561"/>
        <end position="565"/>
    </location>
</feature>
<feature type="helix" evidence="20">
    <location>
        <begin position="571"/>
        <end position="578"/>
    </location>
</feature>
<feature type="helix" evidence="20">
    <location>
        <begin position="583"/>
        <end position="586"/>
    </location>
</feature>
<feature type="strand" evidence="20">
    <location>
        <begin position="593"/>
        <end position="595"/>
    </location>
</feature>
<feature type="helix" evidence="20">
    <location>
        <begin position="604"/>
        <end position="619"/>
    </location>
</feature>
<feature type="strand" evidence="20">
    <location>
        <begin position="622"/>
        <end position="630"/>
    </location>
</feature>
<feature type="helix" evidence="20">
    <location>
        <begin position="643"/>
        <end position="652"/>
    </location>
</feature>
<feature type="helix" evidence="20">
    <location>
        <begin position="655"/>
        <end position="664"/>
    </location>
</feature>
<feature type="strand" evidence="20">
    <location>
        <begin position="668"/>
        <end position="671"/>
    </location>
</feature>
<feature type="helix" evidence="20">
    <location>
        <begin position="672"/>
        <end position="679"/>
    </location>
</feature>
<feature type="turn" evidence="20">
    <location>
        <begin position="680"/>
        <end position="682"/>
    </location>
</feature>
<feature type="helix" evidence="20">
    <location>
        <begin position="694"/>
        <end position="704"/>
    </location>
</feature>
<feature type="strand" evidence="20">
    <location>
        <begin position="713"/>
        <end position="718"/>
    </location>
</feature>
<feature type="helix" evidence="20">
    <location>
        <begin position="722"/>
        <end position="735"/>
    </location>
</feature>
<organism>
    <name type="scientific">Arabidopsis thaliana</name>
    <name type="common">Mouse-ear cress</name>
    <dbReference type="NCBI Taxonomy" id="3702"/>
    <lineage>
        <taxon>Eukaryota</taxon>
        <taxon>Viridiplantae</taxon>
        <taxon>Streptophyta</taxon>
        <taxon>Embryophyta</taxon>
        <taxon>Tracheophyta</taxon>
        <taxon>Spermatophyta</taxon>
        <taxon>Magnoliopsida</taxon>
        <taxon>eudicotyledons</taxon>
        <taxon>Gunneridae</taxon>
        <taxon>Pentapetalae</taxon>
        <taxon>rosids</taxon>
        <taxon>malvids</taxon>
        <taxon>Brassicales</taxon>
        <taxon>Brassicaceae</taxon>
        <taxon>Camelineae</taxon>
        <taxon>Arabidopsis</taxon>
    </lineage>
</organism>
<dbReference type="EMBL" id="Z34293">
    <property type="protein sequence ID" value="CAA84066.1"/>
    <property type="status" value="ALT_FRAME"/>
    <property type="molecule type" value="mRNA"/>
</dbReference>
<dbReference type="EMBL" id="AP000368">
    <property type="protein sequence ID" value="BAA98070.1"/>
    <property type="molecule type" value="Genomic_DNA"/>
</dbReference>
<dbReference type="EMBL" id="CP002688">
    <property type="protein sequence ID" value="AED95022.1"/>
    <property type="molecule type" value="Genomic_DNA"/>
</dbReference>
<dbReference type="EMBL" id="AK229124">
    <property type="protein sequence ID" value="BAF00999.1"/>
    <property type="molecule type" value="mRNA"/>
</dbReference>
<dbReference type="PIR" id="S51824">
    <property type="entry name" value="S51824"/>
</dbReference>
<dbReference type="RefSeq" id="NP_199203.1">
    <molecule id="Q9LKB9-1"/>
    <property type="nucleotide sequence ID" value="NM_123757.5"/>
</dbReference>
<dbReference type="PDB" id="7DHW">
    <property type="method" value="X-ray"/>
    <property type="resolution" value="2.84 A"/>
    <property type="chains" value="A=1-738"/>
</dbReference>
<dbReference type="PDBsum" id="7DHW"/>
<dbReference type="SMR" id="Q9LKB9"/>
<dbReference type="BioGRID" id="19662">
    <property type="interactions" value="3"/>
</dbReference>
<dbReference type="FunCoup" id="Q9LKB9">
    <property type="interactions" value="1932"/>
</dbReference>
<dbReference type="IntAct" id="Q9LKB9">
    <property type="interactions" value="3"/>
</dbReference>
<dbReference type="STRING" id="3702.Q9LKB9"/>
<dbReference type="iPTMnet" id="Q9LKB9"/>
<dbReference type="PaxDb" id="3702-AT5G43900.3"/>
<dbReference type="ProteomicsDB" id="251405">
    <molecule id="Q9LKB9-1"/>
</dbReference>
<dbReference type="EnsemblPlants" id="AT5G43900.1">
    <molecule id="Q9LKB9-1"/>
    <property type="protein sequence ID" value="AT5G43900.1"/>
    <property type="gene ID" value="AT5G43900"/>
</dbReference>
<dbReference type="GeneID" id="834412"/>
<dbReference type="Gramene" id="AT5G43900.1">
    <molecule id="Q9LKB9-1"/>
    <property type="protein sequence ID" value="AT5G43900.1"/>
    <property type="gene ID" value="AT5G43900"/>
</dbReference>
<dbReference type="KEGG" id="ath:AT5G43900"/>
<dbReference type="Araport" id="AT5G43900"/>
<dbReference type="TAIR" id="AT5G43900">
    <property type="gene designation" value="MYA2"/>
</dbReference>
<dbReference type="eggNOG" id="KOG0160">
    <property type="taxonomic scope" value="Eukaryota"/>
</dbReference>
<dbReference type="HOGENOM" id="CLU_000192_3_1_1"/>
<dbReference type="InParanoid" id="Q9LKB9"/>
<dbReference type="OMA" id="RRTFCEF"/>
<dbReference type="OrthoDB" id="6108017at2759"/>
<dbReference type="PhylomeDB" id="Q9LKB9"/>
<dbReference type="PRO" id="PR:Q9LKB9"/>
<dbReference type="Proteomes" id="UP000006548">
    <property type="component" value="Chromosome 5"/>
</dbReference>
<dbReference type="ExpressionAtlas" id="Q9LKB9">
    <property type="expression patterns" value="baseline and differential"/>
</dbReference>
<dbReference type="GO" id="GO:0005737">
    <property type="term" value="C:cytoplasm"/>
    <property type="evidence" value="ECO:0007669"/>
    <property type="project" value="UniProtKB-SubCell"/>
</dbReference>
<dbReference type="GO" id="GO:0016459">
    <property type="term" value="C:myosin complex"/>
    <property type="evidence" value="ECO:0007669"/>
    <property type="project" value="UniProtKB-KW"/>
</dbReference>
<dbReference type="GO" id="GO:0003779">
    <property type="term" value="F:actin binding"/>
    <property type="evidence" value="ECO:0007669"/>
    <property type="project" value="UniProtKB-KW"/>
</dbReference>
<dbReference type="GO" id="GO:0005524">
    <property type="term" value="F:ATP binding"/>
    <property type="evidence" value="ECO:0007669"/>
    <property type="project" value="UniProtKB-KW"/>
</dbReference>
<dbReference type="GO" id="GO:0005516">
    <property type="term" value="F:calmodulin binding"/>
    <property type="evidence" value="ECO:0007669"/>
    <property type="project" value="UniProtKB-KW"/>
</dbReference>
<dbReference type="GO" id="GO:0003774">
    <property type="term" value="F:cytoskeletal motor activity"/>
    <property type="evidence" value="ECO:0007669"/>
    <property type="project" value="InterPro"/>
</dbReference>
<dbReference type="GO" id="GO:0007015">
    <property type="term" value="P:actin filament organization"/>
    <property type="evidence" value="ECO:0007669"/>
    <property type="project" value="InterPro"/>
</dbReference>
<dbReference type="GO" id="GO:0030048">
    <property type="term" value="P:actin filament-based movement"/>
    <property type="evidence" value="ECO:0007669"/>
    <property type="project" value="UniProtKB-ARBA"/>
</dbReference>
<dbReference type="CDD" id="cd23767">
    <property type="entry name" value="IQCD"/>
    <property type="match status" value="1"/>
</dbReference>
<dbReference type="CDD" id="cd15475">
    <property type="entry name" value="MyosinXI_CBD"/>
    <property type="match status" value="1"/>
</dbReference>
<dbReference type="CDD" id="cd01384">
    <property type="entry name" value="MYSc_Myo11"/>
    <property type="match status" value="1"/>
</dbReference>
<dbReference type="FunFam" id="1.20.58.530:FF:000002">
    <property type="entry name" value="Class V myosin"/>
    <property type="match status" value="1"/>
</dbReference>
<dbReference type="FunFam" id="1.20.120.720:FF:000011">
    <property type="entry name" value="Myosin 2"/>
    <property type="match status" value="1"/>
</dbReference>
<dbReference type="FunFam" id="1.10.10.820:FF:000001">
    <property type="entry name" value="Myosin heavy chain"/>
    <property type="match status" value="1"/>
</dbReference>
<dbReference type="FunFam" id="1.20.5.190:FF:000018">
    <property type="entry name" value="Myosin XI D"/>
    <property type="match status" value="1"/>
</dbReference>
<dbReference type="FunFam" id="1.20.5.190:FF:000001">
    <property type="entry name" value="unconventional myosin-Va"/>
    <property type="match status" value="2"/>
</dbReference>
<dbReference type="Gene3D" id="1.10.10.820">
    <property type="match status" value="1"/>
</dbReference>
<dbReference type="Gene3D" id="1.20.5.190">
    <property type="match status" value="3"/>
</dbReference>
<dbReference type="Gene3D" id="1.20.58.530">
    <property type="match status" value="1"/>
</dbReference>
<dbReference type="Gene3D" id="6.20.240.20">
    <property type="match status" value="1"/>
</dbReference>
<dbReference type="Gene3D" id="3.40.850.10">
    <property type="entry name" value="Kinesin motor domain"/>
    <property type="match status" value="1"/>
</dbReference>
<dbReference type="Gene3D" id="1.20.120.720">
    <property type="entry name" value="Myosin VI head, motor domain, U50 subdomain"/>
    <property type="match status" value="1"/>
</dbReference>
<dbReference type="InterPro" id="IPR002710">
    <property type="entry name" value="Dilute_dom"/>
</dbReference>
<dbReference type="InterPro" id="IPR000048">
    <property type="entry name" value="IQ_motif_EF-hand-BS"/>
</dbReference>
<dbReference type="InterPro" id="IPR036961">
    <property type="entry name" value="Kinesin_motor_dom_sf"/>
</dbReference>
<dbReference type="InterPro" id="IPR001609">
    <property type="entry name" value="Myosin_head_motor_dom-like"/>
</dbReference>
<dbReference type="InterPro" id="IPR004009">
    <property type="entry name" value="Myosin_N"/>
</dbReference>
<dbReference type="InterPro" id="IPR037975">
    <property type="entry name" value="MyosinXI_CBD"/>
</dbReference>
<dbReference type="InterPro" id="IPR036018">
    <property type="entry name" value="MYSc_Myo11"/>
</dbReference>
<dbReference type="InterPro" id="IPR027417">
    <property type="entry name" value="P-loop_NTPase"/>
</dbReference>
<dbReference type="PANTHER" id="PTHR13140">
    <property type="entry name" value="MYOSIN"/>
    <property type="match status" value="1"/>
</dbReference>
<dbReference type="PANTHER" id="PTHR13140:SF836">
    <property type="entry name" value="MYOSIN-6"/>
    <property type="match status" value="1"/>
</dbReference>
<dbReference type="Pfam" id="PF01843">
    <property type="entry name" value="DIL"/>
    <property type="match status" value="1"/>
</dbReference>
<dbReference type="Pfam" id="PF00612">
    <property type="entry name" value="IQ"/>
    <property type="match status" value="6"/>
</dbReference>
<dbReference type="Pfam" id="PF00063">
    <property type="entry name" value="Myosin_head"/>
    <property type="match status" value="1"/>
</dbReference>
<dbReference type="Pfam" id="PF02736">
    <property type="entry name" value="Myosin_N"/>
    <property type="match status" value="1"/>
</dbReference>
<dbReference type="PRINTS" id="PR00193">
    <property type="entry name" value="MYOSINHEAVY"/>
</dbReference>
<dbReference type="SMART" id="SM01132">
    <property type="entry name" value="DIL"/>
    <property type="match status" value="1"/>
</dbReference>
<dbReference type="SMART" id="SM00015">
    <property type="entry name" value="IQ"/>
    <property type="match status" value="6"/>
</dbReference>
<dbReference type="SMART" id="SM00242">
    <property type="entry name" value="MYSc"/>
    <property type="match status" value="1"/>
</dbReference>
<dbReference type="SUPFAM" id="SSF52540">
    <property type="entry name" value="P-loop containing nucleoside triphosphate hydrolases"/>
    <property type="match status" value="2"/>
</dbReference>
<dbReference type="PROSITE" id="PS51126">
    <property type="entry name" value="DILUTE"/>
    <property type="match status" value="1"/>
</dbReference>
<dbReference type="PROSITE" id="PS50096">
    <property type="entry name" value="IQ"/>
    <property type="match status" value="6"/>
</dbReference>
<dbReference type="PROSITE" id="PS51456">
    <property type="entry name" value="MYOSIN_MOTOR"/>
    <property type="match status" value="1"/>
</dbReference>
<dbReference type="PROSITE" id="PS51844">
    <property type="entry name" value="SH3_LIKE"/>
    <property type="match status" value="1"/>
</dbReference>
<keyword id="KW-0002">3D-structure</keyword>
<keyword id="KW-0009">Actin-binding</keyword>
<keyword id="KW-0025">Alternative splicing</keyword>
<keyword id="KW-0067">ATP-binding</keyword>
<keyword id="KW-0112">Calmodulin-binding</keyword>
<keyword id="KW-0175">Coiled coil</keyword>
<keyword id="KW-0963">Cytoplasm</keyword>
<keyword id="KW-0505">Motor protein</keyword>
<keyword id="KW-0518">Myosin</keyword>
<keyword id="KW-0547">Nucleotide-binding</keyword>
<keyword id="KW-1185">Reference proteome</keyword>
<keyword id="KW-0677">Repeat</keyword>
<proteinExistence type="evidence at protein level"/>
<sequence length="1505" mass="169931">MVANFNPSVGSFVWVEDPDEAWIDGEVVQVNGDEIKVLCTSGKHVVTKISNAYPKDVEAPASGVDDMTRLAYLHEPGVLQNLHSRYDINEIYTYTGSILIAVNPFRRLPHLYSSHMMAQYKGASLGELSPHPFAVADAAYRQMINDGVSQSILVSGESGAGKTESTKLLMRYLAYMGGRAAAEGRSVEQKVLESNPVLEAFGNAKTVRNNNSSRFGKFVEIQFDEKGRISGAAIRTYLLERSRVCQVSDPERNYHCFYMLCAAPQEDVKKFKLEEPKKYHYLNQSKCLELDSINDAEEYHATRRAMDVVGISTEEQDAIFSVVAAILHIGNIEFAKGEEIDSSIPKDDKSLFHLKTAAELLSCDEKALEDSLCKRIMVTRDETITKTLDPEAATLSRDALAKVMYSRLFDWLVDKINSSIGQDHDSKYLIGVLDIYGFESFKTNSFEQFCINLTNEKLQQHFNQHVFKMEQEEYKKEEINWSYIEFVDNQDILDLIEKKPGGIIALLDEACMFPRSTHETFAQKLYQTFKTHKRFTKPKLARSDFTICHYAGDVTYQTELFLDKNKDYVIAEHQALLNSSSCSFVASLFPPMSDDSKQSKFSSIGTRFKQQLVSLLEILNTTEPHYIRCIKPNNLLKPGIFENENILQQLRCGGVMEAIRISCAGYPTRKHFDEFLARFGILAPEVLVKNSDDPAACKKLLDKVGLEGYQIGKTKVFLRAGQMADLDTRRTEVLGRSASIIQRKVRSYLAKKSFIVLRNSAKQIQSVCRGYLARSVYEGMRREAAALKIQRDLRRFLARKAYTELYSAAVSVQAGMRGMVARKELCFRRQTKAAIIIQTWCRGYLARLHYRKLKKAAITTQCAWRSKVARGELRKLKMAARETGALQAAKNKLEKQVEELTWRLQLEKRIRTDLEEAKKQESAKAQSSLEELQLKCKETEALLIKEREAAKKIAETAPIIKEIPVVDQELMDKITNENEKLKSMVSSLEMKIGETEKKLQETTKISQDRLNQALEAESKLVKLKTAMQRLEEKILDMEAEKKIMHQQTISTPVRTNLGHPPTAPVKNLENGHQTNLEKEFNEAEFTTPVDGKAGKSAAERQIMNVDALIDCVKDNIGFSNGKPVAAFTIYKCLLHWKCFESEKTNVFDRLIQMIGSAIENEDDNSHLAYWLTSTSALLFLLQKSLKTNGSGATQSKKPPASTSLFGRMAMSFRSSPASGNLAAAAEAAALAVVRPVEAKYPALLFKQQLAAYVEKMFGMVRDNLKRELSTLLSLCIQAPRSSKGGMLRSGRSFGKDSPAVHWQSIIDGLNSLLVTLKENHVPLVLIQKIYSQTFSYINVQLFNSLLLRKECCTFSNGEFVKSGLAELELWCCQAKEYSGPSWEELKHIRQAVGFLVIHQKYRISYDEIANDLCPVLSVQQLYRICTLYWDDSYNTRSVSQEVISSMRTLMTEESNDADSDSFLLDDDSSIPFSIDDISSSMEEKDFVGIKPAEELLENPAFVFLH</sequence>
<comment type="function">
    <text evidence="7 10 13 14 15 16 17">Myosin heavy chain that is required for the cell cycle-regulated transport of various organelles and proteins for their segregation. Functions by binding with its tail domain to receptor proteins on organelles and exerting force with its N-terminal motor domain against actin filaments, thereby transporting its cargo along polarized actin cables. Involved in the tip growth of root hair cells. Plays a major role in trafficking of Golgi stacks, mitochondria and peroxisomes during root hair development. Targets the peroxisome through an interaction with RABC2A. Required for development of pavement cells, trichomes, and stigmatic papillae.</text>
</comment>
<comment type="subunit">
    <text evidence="1 12">Homodimer (By similarity). Interacts with RABC2A and RABD1.</text>
</comment>
<comment type="interaction">
    <interactant intactId="EBI-2009528">
        <id>Q9LKB9</id>
    </interactant>
    <interactant intactId="EBI-2009559">
        <id>O49841</id>
        <label>RABC2A</label>
    </interactant>
    <organismsDiffer>false</organismsDiffer>
    <experiments>3</experiments>
</comment>
<comment type="interaction">
    <interactant intactId="EBI-2009528">
        <id>Q9LKB9</id>
    </interactant>
    <interactant intactId="EBI-2009542">
        <id>Q9ZRE2</id>
        <label>RABD1</label>
    </interactant>
    <organismsDiffer>false</organismsDiffer>
    <experiments>3</experiments>
</comment>
<comment type="subcellular location">
    <subcellularLocation>
        <location evidence="7 8 9">Cytoplasm</location>
    </subcellularLocation>
    <text>Colocalizes with peroxisome and cytoplasmic vesicles.</text>
</comment>
<comment type="alternative products">
    <event type="alternative splicing"/>
    <isoform>
        <id>Q9LKB9-1</id>
        <name>1</name>
        <sequence type="displayed"/>
    </isoform>
    <text>A number of isoforms are produced. According to EST sequences.</text>
</comment>
<comment type="tissue specificity">
    <text evidence="18">Expressed in flowers, leaves, roots and stems.</text>
</comment>
<comment type="domain">
    <text evidence="9 11">Head-neck domain associates with cytoplasmic (transvacuolar) F-actin in areas coinciding with the tracks of fast organelles.</text>
</comment>
<comment type="domain">
    <text evidence="1">IQ domain mediates interaction with calmodulin.</text>
</comment>
<comment type="domain">
    <text evidence="1">The tail domain is a globular cargo-binding domain.</text>
</comment>
<comment type="disruption phenotype">
    <text evidence="7 10 13">Impaired growth of root hair cells (PubMed:18178669). No visible phenotype (PubMed:15792961).</text>
</comment>
<comment type="similarity">
    <text evidence="19">Belongs to the TRAFAC class myosin-kinesin ATPase superfamily. Myosin family. Plant myosin class XI subfamily.</text>
</comment>
<comment type="sequence caution" evidence="19">
    <conflict type="frameshift">
        <sequence resource="EMBL-CDS" id="CAA84066"/>
    </conflict>
</comment>
<reference key="1">
    <citation type="journal article" date="1994" name="Plant Mol. Biol.">
        <title>Molecular analysis of the myosin gene family in Arabidopsis thaliana.</title>
        <authorList>
            <person name="Kinkema M.D."/>
            <person name="Wang H."/>
            <person name="Schiefelbein J."/>
        </authorList>
    </citation>
    <scope>NUCLEOTIDE SEQUENCE [MRNA]</scope>
    <scope>TISSUE SPECIFICITY</scope>
    <source>
        <strain>cv. Columbia</strain>
        <tissue>Seedling</tissue>
    </source>
</reference>
<reference key="2">
    <citation type="submission" date="1999-07" db="EMBL/GenBank/DDBJ databases">
        <title>Structural analysis of Arabidopsis thaliana chromosome 5. XI.</title>
        <authorList>
            <person name="Kaneko T."/>
            <person name="Katoh T."/>
            <person name="Asamizu E."/>
            <person name="Sato S."/>
            <person name="Nakamura Y."/>
            <person name="Kotani H."/>
            <person name="Tabata S."/>
        </authorList>
    </citation>
    <scope>NUCLEOTIDE SEQUENCE [LARGE SCALE GENOMIC DNA]</scope>
    <source>
        <strain>cv. Columbia</strain>
    </source>
</reference>
<reference key="3">
    <citation type="journal article" date="2017" name="Plant J.">
        <title>Araport11: a complete reannotation of the Arabidopsis thaliana reference genome.</title>
        <authorList>
            <person name="Cheng C.Y."/>
            <person name="Krishnakumar V."/>
            <person name="Chan A.P."/>
            <person name="Thibaud-Nissen F."/>
            <person name="Schobel S."/>
            <person name="Town C.D."/>
        </authorList>
    </citation>
    <scope>GENOME REANNOTATION</scope>
    <source>
        <strain>cv. Columbia</strain>
    </source>
</reference>
<reference key="4">
    <citation type="submission" date="2006-07" db="EMBL/GenBank/DDBJ databases">
        <title>Large-scale analysis of RIKEN Arabidopsis full-length (RAFL) cDNAs.</title>
        <authorList>
            <person name="Totoki Y."/>
            <person name="Seki M."/>
            <person name="Ishida J."/>
            <person name="Nakajima M."/>
            <person name="Enju A."/>
            <person name="Kamiya A."/>
            <person name="Narusaka M."/>
            <person name="Shin-i T."/>
            <person name="Nakagawa M."/>
            <person name="Sakamoto N."/>
            <person name="Oishi K."/>
            <person name="Kohara Y."/>
            <person name="Kobayashi M."/>
            <person name="Toyoda A."/>
            <person name="Sakaki Y."/>
            <person name="Sakurai T."/>
            <person name="Iida K."/>
            <person name="Akiyama K."/>
            <person name="Satou M."/>
            <person name="Toyoda T."/>
            <person name="Konagaya A."/>
            <person name="Carninci P."/>
            <person name="Kawai J."/>
            <person name="Hayashizaki Y."/>
            <person name="Shinozaki K."/>
        </authorList>
    </citation>
    <scope>NUCLEOTIDE SEQUENCE [LARGE SCALE MRNA] OF 408-1505</scope>
    <source>
        <strain>cv. Columbia</strain>
    </source>
</reference>
<reference key="5">
    <citation type="journal article" date="2000" name="J. Cell Sci.">
        <title>A myosin family tree.</title>
        <authorList>
            <person name="Hodge T."/>
            <person name="Cope M.J."/>
        </authorList>
    </citation>
    <scope>GENE FAMILY</scope>
</reference>
<reference key="6">
    <citation type="journal article" date="2001" name="Genome Biol.">
        <title>Analysis of the myosins encoded in the recently completed Arabidopsis thaliana genome sequence.</title>
        <authorList>
            <person name="Reddy A.S."/>
            <person name="Day I.S."/>
        </authorList>
    </citation>
    <scope>GENE FAMILY</scope>
</reference>
<reference key="7">
    <citation type="journal article" date="2005" name="Plant Cell Physiol.">
        <title>Peroxisomal localization of a myosin XI isoform in Arabidopsis thaliana.</title>
        <authorList>
            <person name="Hashimoto K."/>
            <person name="Igarashi H."/>
            <person name="Mano S."/>
            <person name="Nishimura M."/>
            <person name="Shimmen T."/>
            <person name="Yokota E."/>
        </authorList>
    </citation>
    <scope>SUBCELLULAR LOCATION</scope>
    <scope>FUNCTION</scope>
    <scope>DISRUPTION PHENOTYPE</scope>
</reference>
<reference key="8">
    <citation type="journal article" date="2007" name="BMC Plant Biol.">
        <title>Association of six YFP-myosin XI-tail fusions with mobile plant cell organelles.</title>
        <authorList>
            <person name="Reisen D."/>
            <person name="Hanson M.R."/>
        </authorList>
    </citation>
    <scope>SUBCELLULAR LOCATION</scope>
</reference>
<reference key="9">
    <citation type="journal article" date="2007" name="J. Biol. Chem.">
        <title>Organelle targeting of myosin XI is mediated by two globular tail subdomains with separate cargo binding sites.</title>
        <authorList>
            <person name="Li J.F."/>
            <person name="Nebenfuehr A."/>
        </authorList>
    </citation>
    <scope>DOMAIN</scope>
    <scope>SUBCELLULAR LOCATION</scope>
</reference>
<reference key="10">
    <citation type="journal article" date="2008" name="BMC Plant Biol.">
        <title>Head-neck domain of Arabidopsis myosin XI, MYA2, fused with GFP produces F-actin patterns that coincide with fast organelle streaming in different plant cells.</title>
        <authorList>
            <person name="Walter N."/>
            <person name="Holweg C.L."/>
        </authorList>
    </citation>
    <scope>DOMAIN</scope>
    <scope>ACTIN-BINDING</scope>
</reference>
<reference key="11">
    <citation type="journal article" date="2008" name="J. Exp. Bot.">
        <title>An isoform of Arabidopsis myosin XI interacts with small GTPases in its C-terminal tail region.</title>
        <authorList>
            <person name="Hashimoto K."/>
            <person name="Igarashi H."/>
            <person name="Mano S."/>
            <person name="Takenaka C."/>
            <person name="Shiina T."/>
            <person name="Yamaguchi M."/>
            <person name="Demura T."/>
            <person name="Nishimura M."/>
            <person name="Shimmen T."/>
            <person name="Yokota E."/>
        </authorList>
    </citation>
    <scope>INTERACTION WITH RABD1 AND RABC2A</scope>
</reference>
<reference key="12">
    <citation type="journal article" date="2008" name="Plant Physiol.">
        <title>Two class XI myosins function in organelle trafficking and root hair development in Arabidopsis.</title>
        <authorList>
            <person name="Peremyslov V.V."/>
            <person name="Prokhnevsky A.I."/>
            <person name="Avisar D."/>
            <person name="Dolja V.V."/>
        </authorList>
    </citation>
    <scope>DISRUPTION PHENOTYPE</scope>
    <scope>FUNCTION</scope>
</reference>
<reference key="13">
    <citation type="journal article" date="2008" name="Proc. Natl. Acad. Sci. U.S.A.">
        <title>Overlapping functions of the four class XI myosins in Arabidopsis growth, root hair elongation, and organelle motility.</title>
        <authorList>
            <person name="Prokhnevsky A.I."/>
            <person name="Peremyslov V.V."/>
            <person name="Dolja V.V."/>
        </authorList>
    </citation>
    <scope>DISRUPTION PHENOTYPE</scope>
    <scope>FUNCTION</scope>
</reference>
<reference key="14">
    <citation type="journal article" date="2009" name="Plant Physiol.">
        <title>A comparative study of the involvement of 17 Arabidopsis myosin family members on the motility of Golgi and other organelles.</title>
        <authorList>
            <person name="Avisar D."/>
            <person name="Abu-Abied M."/>
            <person name="Belausov E."/>
            <person name="Sadot E."/>
            <person name="Hawes C."/>
            <person name="Sparkes I.A."/>
        </authorList>
    </citation>
    <scope>FUNCTION</scope>
</reference>
<reference key="15">
    <citation type="journal article" date="2010" name="Plant Cell">
        <title>Class XI myosins are required for development, cell expansion, and F-Actin organization in Arabidopsis.</title>
        <authorList>
            <person name="Peremyslov V.V."/>
            <person name="Prokhnevsky A.I."/>
            <person name="Dolja V.V."/>
        </authorList>
    </citation>
    <scope>FUNCTION</scope>
</reference>
<reference key="16">
    <citation type="journal article" date="2011" name="Plant Physiol.">
        <title>Expression, splicing, and evolution of the myosin gene family in plants.</title>
        <authorList>
            <person name="Peremyslov V.V."/>
            <person name="Mockler T.C."/>
            <person name="Filichkin S.A."/>
            <person name="Fox S.E."/>
            <person name="Jaiswal P."/>
            <person name="Makarova K.S."/>
            <person name="Koonin E.V."/>
            <person name="Dolja V.V."/>
        </authorList>
    </citation>
    <scope>GENE FAMILY</scope>
    <scope>NOMENCLATURE</scope>
</reference>
<reference key="17">
    <citation type="journal article" date="2012" name="BMC Plant Biol.">
        <title>Myosins XI-K, XI-1, and XI-2 are required for development of pavement cells, trichomes, and stigmatic papillae in Arabidopsis.</title>
        <authorList>
            <person name="Ojangu E.L."/>
            <person name="Tanner K."/>
            <person name="Pata P."/>
            <person name="Jaerve K."/>
            <person name="Holweg C.L."/>
            <person name="Truve E."/>
            <person name="Paves H."/>
        </authorList>
    </citation>
    <scope>FUNCTION</scope>
</reference>
<reference key="18">
    <citation type="journal article" date="2012" name="J. Exp. Bot.">
        <title>Myosin XIK is a major player in cytoplasm dynamics and is regulated by two amino acids in its tail.</title>
        <authorList>
            <person name="Avisar D."/>
            <person name="Abu-Abied M."/>
            <person name="Belausov E."/>
            <person name="Sadot E."/>
        </authorList>
    </citation>
    <scope>FUNCTION</scope>
</reference>
<gene>
    <name type="primary">XI-2</name>
    <name type="synonym">MYA2</name>
    <name type="ordered locus">At5g43900</name>
    <name type="ORF">F6B6.4</name>
</gene>